<reference key="1">
    <citation type="journal article" date="2000" name="Nature">
        <title>Sequence and analysis of chromosome 1 of the plant Arabidopsis thaliana.</title>
        <authorList>
            <person name="Theologis A."/>
            <person name="Ecker J.R."/>
            <person name="Palm C.J."/>
            <person name="Federspiel N.A."/>
            <person name="Kaul S."/>
            <person name="White O."/>
            <person name="Alonso J."/>
            <person name="Altafi H."/>
            <person name="Araujo R."/>
            <person name="Bowman C.L."/>
            <person name="Brooks S.Y."/>
            <person name="Buehler E."/>
            <person name="Chan A."/>
            <person name="Chao Q."/>
            <person name="Chen H."/>
            <person name="Cheuk R.F."/>
            <person name="Chin C.W."/>
            <person name="Chung M.K."/>
            <person name="Conn L."/>
            <person name="Conway A.B."/>
            <person name="Conway A.R."/>
            <person name="Creasy T.H."/>
            <person name="Dewar K."/>
            <person name="Dunn P."/>
            <person name="Etgu P."/>
            <person name="Feldblyum T.V."/>
            <person name="Feng J.-D."/>
            <person name="Fong B."/>
            <person name="Fujii C.Y."/>
            <person name="Gill J.E."/>
            <person name="Goldsmith A.D."/>
            <person name="Haas B."/>
            <person name="Hansen N.F."/>
            <person name="Hughes B."/>
            <person name="Huizar L."/>
            <person name="Hunter J.L."/>
            <person name="Jenkins J."/>
            <person name="Johnson-Hopson C."/>
            <person name="Khan S."/>
            <person name="Khaykin E."/>
            <person name="Kim C.J."/>
            <person name="Koo H.L."/>
            <person name="Kremenetskaia I."/>
            <person name="Kurtz D.B."/>
            <person name="Kwan A."/>
            <person name="Lam B."/>
            <person name="Langin-Hooper S."/>
            <person name="Lee A."/>
            <person name="Lee J.M."/>
            <person name="Lenz C.A."/>
            <person name="Li J.H."/>
            <person name="Li Y.-P."/>
            <person name="Lin X."/>
            <person name="Liu S.X."/>
            <person name="Liu Z.A."/>
            <person name="Luros J.S."/>
            <person name="Maiti R."/>
            <person name="Marziali A."/>
            <person name="Militscher J."/>
            <person name="Miranda M."/>
            <person name="Nguyen M."/>
            <person name="Nierman W.C."/>
            <person name="Osborne B.I."/>
            <person name="Pai G."/>
            <person name="Peterson J."/>
            <person name="Pham P.K."/>
            <person name="Rizzo M."/>
            <person name="Rooney T."/>
            <person name="Rowley D."/>
            <person name="Sakano H."/>
            <person name="Salzberg S.L."/>
            <person name="Schwartz J.R."/>
            <person name="Shinn P."/>
            <person name="Southwick A.M."/>
            <person name="Sun H."/>
            <person name="Tallon L.J."/>
            <person name="Tambunga G."/>
            <person name="Toriumi M.J."/>
            <person name="Town C.D."/>
            <person name="Utterback T."/>
            <person name="Van Aken S."/>
            <person name="Vaysberg M."/>
            <person name="Vysotskaia V.S."/>
            <person name="Walker M."/>
            <person name="Wu D."/>
            <person name="Yu G."/>
            <person name="Fraser C.M."/>
            <person name="Venter J.C."/>
            <person name="Davis R.W."/>
        </authorList>
    </citation>
    <scope>NUCLEOTIDE SEQUENCE [LARGE SCALE GENOMIC DNA]</scope>
    <source>
        <strain>cv. Columbia</strain>
    </source>
</reference>
<reference key="2">
    <citation type="journal article" date="2017" name="Plant J.">
        <title>Araport11: a complete reannotation of the Arabidopsis thaliana reference genome.</title>
        <authorList>
            <person name="Cheng C.Y."/>
            <person name="Krishnakumar V."/>
            <person name="Chan A.P."/>
            <person name="Thibaud-Nissen F."/>
            <person name="Schobel S."/>
            <person name="Town C.D."/>
        </authorList>
    </citation>
    <scope>GENOME REANNOTATION</scope>
    <source>
        <strain>cv. Columbia</strain>
    </source>
</reference>
<reference key="3">
    <citation type="journal article" date="2002" name="Science">
        <title>Functional annotation of a full-length Arabidopsis cDNA collection.</title>
        <authorList>
            <person name="Seki M."/>
            <person name="Narusaka M."/>
            <person name="Kamiya A."/>
            <person name="Ishida J."/>
            <person name="Satou M."/>
            <person name="Sakurai T."/>
            <person name="Nakajima M."/>
            <person name="Enju A."/>
            <person name="Akiyama K."/>
            <person name="Oono Y."/>
            <person name="Muramatsu M."/>
            <person name="Hayashizaki Y."/>
            <person name="Kawai J."/>
            <person name="Carninci P."/>
            <person name="Itoh M."/>
            <person name="Ishii Y."/>
            <person name="Arakawa T."/>
            <person name="Shibata K."/>
            <person name="Shinagawa A."/>
            <person name="Shinozaki K."/>
        </authorList>
    </citation>
    <scope>NUCLEOTIDE SEQUENCE [LARGE SCALE MRNA]</scope>
    <source>
        <strain>cv. Columbia</strain>
    </source>
</reference>
<reference key="4">
    <citation type="submission" date="2006-02" db="EMBL/GenBank/DDBJ databases">
        <title>Arabidopsis ORF clones.</title>
        <authorList>
            <person name="Shinn P."/>
            <person name="Chen H."/>
            <person name="Kim C.J."/>
            <person name="Ecker J.R."/>
        </authorList>
    </citation>
    <scope>NUCLEOTIDE SEQUENCE [LARGE SCALE MRNA]</scope>
    <source>
        <strain>cv. Columbia</strain>
    </source>
</reference>
<reference key="5">
    <citation type="journal article" date="2008" name="Proc. Natl. Acad. Sci. U.S.A.">
        <title>Prefoldin 6 is required for normal microtubule dynamics and organization in Arabidopsis.</title>
        <authorList>
            <person name="Gu Y."/>
            <person name="Deng Z."/>
            <person name="Paredez A.R."/>
            <person name="DeBolt S."/>
            <person name="Wang Z.-Y."/>
            <person name="Somerville C."/>
        </authorList>
    </citation>
    <scope>FUNCTION</scope>
    <scope>DISRUPTION PHENOTYPE</scope>
    <scope>SUBCELLULAR LOCATION</scope>
    <scope>INTERACTION WITH PFD2; PFD3; PFD4 AND PFD5</scope>
    <source>
        <strain>cv. Columbia</strain>
    </source>
</reference>
<reference key="6">
    <citation type="journal article" date="2009" name="Mol. Plant">
        <title>Prefoldins 3 and 5 play an essential role in Arabidopsis tolerance to salt stress.</title>
        <authorList>
            <person name="Rodriguez-Milla M.A."/>
            <person name="Salinas J."/>
        </authorList>
    </citation>
    <scope>FUNCTION</scope>
    <scope>GENE FAMILY</scope>
    <scope>NOMENCLATURE</scope>
</reference>
<reference key="7">
    <citation type="journal article" date="2013" name="Curr. Biol.">
        <title>Dynamic regulation of cortical microtubule organization through prefoldin-DELLA interaction.</title>
        <authorList>
            <person name="Locascio A."/>
            <person name="Blazquez M.A."/>
            <person name="Alabadi D."/>
        </authorList>
    </citation>
    <scope>FUNCTION</scope>
    <scope>SUBCELLULAR LOCATION</scope>
</reference>
<reference key="8">
    <citation type="journal article" date="2017" name="Mol. Plant">
        <title>Prefoldins negatively regulate cold acclimation in Arabidopsis thaliana by promoting nuclear proteasome-mediated HY5 degradation.</title>
        <authorList>
            <person name="Perea-Resa C."/>
            <person name="Rodriguez-Milla M.A."/>
            <person name="Iniesto E."/>
            <person name="Rubio V."/>
            <person name="Salinas J."/>
        </authorList>
    </citation>
    <scope>INDUCTION BY COLD</scope>
</reference>
<reference key="9">
    <citation type="journal article" date="2018" name="Proc. Natl. Acad. Sci. U.S.A.">
        <title>Gibberellin DELLA signaling targets the retromer complex to redirect protein trafficking to the plasma membrane.</title>
        <authorList>
            <person name="Salanenka Y."/>
            <person name="Verstraeten I."/>
            <person name="Loefke C."/>
            <person name="Tabata K."/>
            <person name="Naramoto S."/>
            <person name="Glanc M."/>
            <person name="Friml J."/>
        </authorList>
    </citation>
    <scope>FUNCTION</scope>
    <scope>DISRUPTION PHENOTYPE</scope>
    <source>
        <strain>cv. Columbia</strain>
    </source>
</reference>
<reference key="10">
    <citation type="journal article" date="2020" name="Nucleic Acids Res.">
        <title>Prefoldins contribute to maintaining the levels of the spliceosome LSM2-8 complex through Hsp90 in Arabidopsis.</title>
        <authorList>
            <person name="Esteve-Bruna D."/>
            <person name="Carrasco-Lopez C."/>
            <person name="Blanco-Tourinan N."/>
            <person name="Iserte J."/>
            <person name="Calleja-Cabrera J."/>
            <person name="Perea-Resa C."/>
            <person name="Urbez C."/>
            <person name="Carrasco P."/>
            <person name="Yanovsky M.J."/>
            <person name="Blazquez M.A."/>
            <person name="Salinas J."/>
            <person name="Alabadi D."/>
        </authorList>
    </citation>
    <scope>FUNCTION</scope>
    <scope>MUTAGENESIS OF ARG-83</scope>
    <scope>DISRUPTION PHENOTYPE</scope>
    <scope>INTERACTION WITH LSM8 AND HSP90</scope>
    <source>
        <strain>cv. Columbia</strain>
    </source>
</reference>
<comment type="function">
    <text evidence="3 4 5 7 8">Binds specifically to cytosolic chaperonin (c-CPN) and transfers target proteins to it (PubMed:19825635). Binds to nascent polypeptide chain and promotes folding in an environment in which there are many competing pathways for nonnative proteins (PubMed:19825635). Together with other chaperonins, contribute to the regulation of gene expression by modulating the spliceosome function on pre-mRNA splicing post-transcriptionally by acting as a co-chaperone of Hsp90 to control levels of LSM8 (PubMed:32396196). Required for the biogenesis of tubulins and for subsequent microtubules (MTs) organization and dynamicity, but unable to associate with microtubules (PubMed:19004800). Involved in the process leading to microtubules dissociation in response to gibberellic acid (GA) probably due to the DELLA proteins-mediated translocation of the prefoldin co-chaperone complex from the cytoplasm to the nucleus (PubMed:23583555). Contributes to the GA-dependent regulation of PIN2 trafficking at the plasma membrane, thus influencing auxin flux (PubMed:29463731).</text>
</comment>
<comment type="subunit">
    <text evidence="1 3 8">Heterohexamer of two PFD-alpha type and four PFD-beta type subunits forming prefoldin co-chaperone complex (By similarity). Interacts with PFD2, PFD3, PFD4 and PFD5 (PubMed:19004800). Interacts with LSM8, a specific subunit of the LSM2-8 complex, which is a core component of the spliceosome (PubMed:32396196). Binds to HSP90 to facilitate the formation of a larger complex made at least of HSP90, PFD6 and LSM8 (PubMed:32396196).</text>
</comment>
<comment type="subcellular location">
    <subcellularLocation>
        <location evidence="3 5">Cytoplasm</location>
    </subcellularLocation>
    <subcellularLocation>
        <location evidence="5">Nucleus</location>
    </subcellularLocation>
    <text evidence="5">In the presence of gibberellic acid (GA) and at room temperature, the prefoldin complex stays in the cytoplasm and is functional (PubMed:23583555). But in the absence of GA or in response to cold, the prefoldin complex is localized to the nucleus in the presence of DELLA proteins, which severely compromises alpha/beta-tubulin heterodimer availability, thus affecting microtubules (MTs) organization (PubMed:23583555). This changing subcellular localization follows a daily rhythm coordinated oscillation (PubMed:23583555).</text>
</comment>
<comment type="induction">
    <text evidence="6">Accumulates in response to cold.</text>
</comment>
<comment type="disruption phenotype">
    <text evidence="3 7 8">Several microtubules (MTs) defects, including hypersensitivity to oryzalin (a microtubule inhibitor), defects in cell division, abnormal cortical array organization, and impaired microtubule dynamicity, due to reduced tubulins levels (PubMed:19004800). Reduced levels of PIN2 at the plasma membrane (PubMed:29463731). The pfd5 pfd6 double mutant is less sensitive to gibberellic acid (GA)-mediated mobilization of PIN2 at the plasma membrane (PubMed:29463731). Lower pre-mRNA splicing events and reduced production of U6 snRNA in plants lacking PFD2, PFD4 and PFD6, probably due to a reduced activity of the LSM2-8 complex (PubMed:32396196).</text>
</comment>
<comment type="similarity">
    <text evidence="10">Belongs to the prefoldin subunit beta family.</text>
</comment>
<comment type="sequence caution" evidence="10">
    <conflict type="erroneous gene model prediction">
        <sequence resource="EMBL-CDS" id="AAG52059"/>
    </conflict>
</comment>
<protein>
    <recommendedName>
        <fullName evidence="9">Prefoldin subunit 6</fullName>
    </recommendedName>
    <alternativeName>
        <fullName evidence="9">Gene involved in microtubule biogenesis 1</fullName>
    </alternativeName>
</protein>
<sequence length="129" mass="14856">MSSSTVRDLQRDLENKANDLGKIQKDIGKNHQLRKKYTIQLGENELVLKELDLLEEDANVYKLIGPVLVKQDLAEANANVRKRIEYISAELKRLDAILQDMEEKQNNKRETIMKLQQRLQTIQAGKAKA</sequence>
<proteinExistence type="evidence at protein level"/>
<organism>
    <name type="scientific">Arabidopsis thaliana</name>
    <name type="common">Mouse-ear cress</name>
    <dbReference type="NCBI Taxonomy" id="3702"/>
    <lineage>
        <taxon>Eukaryota</taxon>
        <taxon>Viridiplantae</taxon>
        <taxon>Streptophyta</taxon>
        <taxon>Embryophyta</taxon>
        <taxon>Tracheophyta</taxon>
        <taxon>Spermatophyta</taxon>
        <taxon>Magnoliopsida</taxon>
        <taxon>eudicotyledons</taxon>
        <taxon>Gunneridae</taxon>
        <taxon>Pentapetalae</taxon>
        <taxon>rosids</taxon>
        <taxon>malvids</taxon>
        <taxon>Brassicales</taxon>
        <taxon>Brassicaceae</taxon>
        <taxon>Camelineae</taxon>
        <taxon>Arabidopsis</taxon>
    </lineage>
</organism>
<feature type="chain" id="PRO_0000455729" description="Prefoldin subunit 6">
    <location>
        <begin position="1"/>
        <end position="129"/>
    </location>
</feature>
<feature type="coiled-coil region" evidence="2">
    <location>
        <begin position="6"/>
        <end position="26"/>
    </location>
</feature>
<feature type="coiled-coil region" evidence="2">
    <location>
        <begin position="84"/>
        <end position="118"/>
    </location>
</feature>
<feature type="mutagenesis site" description="In pfd6-1; smaller plants and reduced levels of LSM8 via a post-transcriptional process (at protein level). Reduced production of U6 snRNA." evidence="8">
    <original>R</original>
    <variation>Q</variation>
    <location>
        <position position="83"/>
    </location>
</feature>
<feature type="sequence conflict" description="In Ref. 3; BAC42245." evidence="10" ref="3">
    <original>A</original>
    <variation>V</variation>
    <location>
        <position position="96"/>
    </location>
</feature>
<keyword id="KW-0143">Chaperone</keyword>
<keyword id="KW-0175">Coiled coil</keyword>
<keyword id="KW-0963">Cytoplasm</keyword>
<keyword id="KW-0539">Nucleus</keyword>
<keyword id="KW-1185">Reference proteome</keyword>
<dbReference type="EMBL" id="AC022455">
    <property type="protein sequence ID" value="AAG52059.1"/>
    <property type="status" value="ALT_SEQ"/>
    <property type="molecule type" value="Genomic_DNA"/>
</dbReference>
<dbReference type="EMBL" id="CP002684">
    <property type="protein sequence ID" value="AEE31165.1"/>
    <property type="molecule type" value="Genomic_DNA"/>
</dbReference>
<dbReference type="EMBL" id="AK117588">
    <property type="protein sequence ID" value="BAC42245.1"/>
    <property type="molecule type" value="mRNA"/>
</dbReference>
<dbReference type="EMBL" id="BT024577">
    <property type="protein sequence ID" value="ABD38916.1"/>
    <property type="molecule type" value="mRNA"/>
</dbReference>
<dbReference type="PIR" id="G86423">
    <property type="entry name" value="G86423"/>
</dbReference>
<dbReference type="RefSeq" id="NP_174292.2">
    <property type="nucleotide sequence ID" value="NM_102739.4"/>
</dbReference>
<dbReference type="SMR" id="Q2HIK4"/>
<dbReference type="FunCoup" id="Q2HIK4">
    <property type="interactions" value="4253"/>
</dbReference>
<dbReference type="IntAct" id="Q2HIK4">
    <property type="interactions" value="6"/>
</dbReference>
<dbReference type="STRING" id="3702.Q2HIK4"/>
<dbReference type="MetOSite" id="Q2HIK4"/>
<dbReference type="PaxDb" id="3702-AT1G29990.1"/>
<dbReference type="ProMEX" id="Q2HIK4"/>
<dbReference type="ProteomicsDB" id="187933"/>
<dbReference type="EnsemblPlants" id="AT1G29990.1">
    <property type="protein sequence ID" value="AT1G29990.1"/>
    <property type="gene ID" value="AT1G29990"/>
</dbReference>
<dbReference type="GeneID" id="839878"/>
<dbReference type="Gramene" id="AT1G29990.1">
    <property type="protein sequence ID" value="AT1G29990.1"/>
    <property type="gene ID" value="AT1G29990"/>
</dbReference>
<dbReference type="KEGG" id="ath:AT1G29990"/>
<dbReference type="Araport" id="AT1G29990"/>
<dbReference type="TAIR" id="AT1G29990">
    <property type="gene designation" value="PFD6"/>
</dbReference>
<dbReference type="eggNOG" id="KOG3478">
    <property type="taxonomic scope" value="Eukaryota"/>
</dbReference>
<dbReference type="HOGENOM" id="CLU_125172_0_0_1"/>
<dbReference type="InParanoid" id="Q2HIK4"/>
<dbReference type="OMA" id="VQTEFAQ"/>
<dbReference type="CD-CODE" id="4299E36E">
    <property type="entry name" value="Nucleolus"/>
</dbReference>
<dbReference type="PRO" id="PR:Q2HIK4"/>
<dbReference type="Proteomes" id="UP000006548">
    <property type="component" value="Chromosome 1"/>
</dbReference>
<dbReference type="ExpressionAtlas" id="Q2HIK4">
    <property type="expression patterns" value="baseline and differential"/>
</dbReference>
<dbReference type="GO" id="GO:0005737">
    <property type="term" value="C:cytoplasm"/>
    <property type="evidence" value="ECO:0000314"/>
    <property type="project" value="UniProtKB"/>
</dbReference>
<dbReference type="GO" id="GO:0005634">
    <property type="term" value="C:nucleus"/>
    <property type="evidence" value="ECO:0000314"/>
    <property type="project" value="UniProtKB"/>
</dbReference>
<dbReference type="GO" id="GO:0016272">
    <property type="term" value="C:prefoldin complex"/>
    <property type="evidence" value="ECO:0000314"/>
    <property type="project" value="UniProtKB"/>
</dbReference>
<dbReference type="GO" id="GO:0051879">
    <property type="term" value="F:Hsp90 protein binding"/>
    <property type="evidence" value="ECO:0000314"/>
    <property type="project" value="UniProtKB"/>
</dbReference>
<dbReference type="GO" id="GO:0051082">
    <property type="term" value="F:unfolded protein binding"/>
    <property type="evidence" value="ECO:0007669"/>
    <property type="project" value="InterPro"/>
</dbReference>
<dbReference type="GO" id="GO:0071370">
    <property type="term" value="P:cellular response to gibberellin stimulus"/>
    <property type="evidence" value="ECO:0000314"/>
    <property type="project" value="UniProtKB"/>
</dbReference>
<dbReference type="GO" id="GO:0043622">
    <property type="term" value="P:cortical microtubule organization"/>
    <property type="evidence" value="ECO:0000314"/>
    <property type="project" value="UniProtKB"/>
</dbReference>
<dbReference type="GO" id="GO:0006397">
    <property type="term" value="P:mRNA processing"/>
    <property type="evidence" value="ECO:0000315"/>
    <property type="project" value="UniProtKB"/>
</dbReference>
<dbReference type="GO" id="GO:0006457">
    <property type="term" value="P:protein folding"/>
    <property type="evidence" value="ECO:0000315"/>
    <property type="project" value="UniProtKB"/>
</dbReference>
<dbReference type="GO" id="GO:1901703">
    <property type="term" value="P:protein localization involved in auxin polar transport"/>
    <property type="evidence" value="ECO:0000315"/>
    <property type="project" value="UniProtKB"/>
</dbReference>
<dbReference type="GO" id="GO:0009409">
    <property type="term" value="P:response to cold"/>
    <property type="evidence" value="ECO:0000270"/>
    <property type="project" value="UniProtKB"/>
</dbReference>
<dbReference type="CDD" id="cd23161">
    <property type="entry name" value="Prefoldin_6"/>
    <property type="match status" value="1"/>
</dbReference>
<dbReference type="FunFam" id="1.10.287.370:FF:000003">
    <property type="entry name" value="Prefoldin subunit 6"/>
    <property type="match status" value="1"/>
</dbReference>
<dbReference type="Gene3D" id="1.10.287.370">
    <property type="match status" value="1"/>
</dbReference>
<dbReference type="InterPro" id="IPR002777">
    <property type="entry name" value="PFD_beta-like"/>
</dbReference>
<dbReference type="InterPro" id="IPR009053">
    <property type="entry name" value="Prefoldin"/>
</dbReference>
<dbReference type="PANTHER" id="PTHR21431">
    <property type="entry name" value="PREFOLDIN SUBUNIT 6"/>
    <property type="match status" value="1"/>
</dbReference>
<dbReference type="PANTHER" id="PTHR21431:SF0">
    <property type="entry name" value="PREFOLDIN SUBUNIT 6"/>
    <property type="match status" value="1"/>
</dbReference>
<dbReference type="Pfam" id="PF01920">
    <property type="entry name" value="Prefoldin_2"/>
    <property type="match status" value="1"/>
</dbReference>
<dbReference type="SUPFAM" id="SSF46579">
    <property type="entry name" value="Prefoldin"/>
    <property type="match status" value="1"/>
</dbReference>
<gene>
    <name evidence="9" type="primary">PFD6</name>
    <name evidence="9" type="synonym">GIM1</name>
    <name evidence="11" type="ordered locus">At1g29990</name>
    <name evidence="12" type="ORF">T1P2.3</name>
</gene>
<accession>Q2HIK4</accession>
<accession>Q8GYJ1</accession>
<accession>Q9C8S0</accession>
<evidence type="ECO:0000250" key="1">
    <source>
        <dbReference type="UniProtKB" id="P46988"/>
    </source>
</evidence>
<evidence type="ECO:0000255" key="2"/>
<evidence type="ECO:0000269" key="3">
    <source>
    </source>
</evidence>
<evidence type="ECO:0000269" key="4">
    <source>
    </source>
</evidence>
<evidence type="ECO:0000269" key="5">
    <source>
    </source>
</evidence>
<evidence type="ECO:0000269" key="6">
    <source>
    </source>
</evidence>
<evidence type="ECO:0000269" key="7">
    <source>
    </source>
</evidence>
<evidence type="ECO:0000269" key="8">
    <source>
    </source>
</evidence>
<evidence type="ECO:0000303" key="9">
    <source>
    </source>
</evidence>
<evidence type="ECO:0000305" key="10"/>
<evidence type="ECO:0000312" key="11">
    <source>
        <dbReference type="Araport" id="AT1G29990"/>
    </source>
</evidence>
<evidence type="ECO:0000312" key="12">
    <source>
        <dbReference type="EMBL" id="AAG52059.1"/>
    </source>
</evidence>
<name>PFD6_ARATH</name>